<comment type="subcellular location">
    <subcellularLocation>
        <location evidence="2">Cell membrane</location>
        <topology evidence="2">Multi-pass membrane protein</topology>
    </subcellularLocation>
</comment>
<comment type="similarity">
    <text evidence="2">Belongs to the GRP transporter (TC 2.A.7.5) family.</text>
</comment>
<dbReference type="EMBL" id="AL935263">
    <property type="protein sequence ID" value="CCC79671.1"/>
    <property type="molecule type" value="Genomic_DNA"/>
</dbReference>
<dbReference type="RefSeq" id="WP_003642758.1">
    <property type="nucleotide sequence ID" value="NC_004567.2"/>
</dbReference>
<dbReference type="RefSeq" id="YP_004890185.1">
    <property type="nucleotide sequence ID" value="NC_004567.2"/>
</dbReference>
<dbReference type="SMR" id="Q88UI3"/>
<dbReference type="STRING" id="220668.lp_2503"/>
<dbReference type="DNASU" id="1062677"/>
<dbReference type="EnsemblBacteria" id="CCC79671">
    <property type="protein sequence ID" value="CCC79671"/>
    <property type="gene ID" value="lp_2503"/>
</dbReference>
<dbReference type="KEGG" id="lpl:lp_2503"/>
<dbReference type="PATRIC" id="fig|220668.9.peg.2108"/>
<dbReference type="eggNOG" id="COG4975">
    <property type="taxonomic scope" value="Bacteria"/>
</dbReference>
<dbReference type="HOGENOM" id="CLU_076024_0_0_9"/>
<dbReference type="OrthoDB" id="1452595at2"/>
<dbReference type="PhylomeDB" id="Q88UI3"/>
<dbReference type="Proteomes" id="UP000000432">
    <property type="component" value="Chromosome"/>
</dbReference>
<dbReference type="GO" id="GO:0005886">
    <property type="term" value="C:plasma membrane"/>
    <property type="evidence" value="ECO:0007669"/>
    <property type="project" value="UniProtKB-SubCell"/>
</dbReference>
<dbReference type="GO" id="GO:0015144">
    <property type="term" value="F:carbohydrate transmembrane transporter activity"/>
    <property type="evidence" value="ECO:0007669"/>
    <property type="project" value="InterPro"/>
</dbReference>
<dbReference type="CDD" id="cd23110">
    <property type="entry name" value="GRP"/>
    <property type="match status" value="1"/>
</dbReference>
<dbReference type="InterPro" id="IPR010651">
    <property type="entry name" value="Sugar_transport"/>
</dbReference>
<dbReference type="PANTHER" id="PTHR16119">
    <property type="entry name" value="TRANSMEMBRANE PROTEIN 144"/>
    <property type="match status" value="1"/>
</dbReference>
<dbReference type="PANTHER" id="PTHR16119:SF17">
    <property type="entry name" value="TRANSMEMBRANE PROTEIN 144"/>
    <property type="match status" value="1"/>
</dbReference>
<dbReference type="Pfam" id="PF06800">
    <property type="entry name" value="Sugar_transport"/>
    <property type="match status" value="1"/>
</dbReference>
<dbReference type="SUPFAM" id="SSF103481">
    <property type="entry name" value="Multidrug resistance efflux transporter EmrE"/>
    <property type="match status" value="2"/>
</dbReference>
<proteinExistence type="inferred from homology"/>
<feature type="chain" id="PRO_0000213653" description="Putative sugar uptake protein lp_2503">
    <location>
        <begin position="1"/>
        <end position="285"/>
    </location>
</feature>
<feature type="transmembrane region" description="Helical" evidence="1">
    <location>
        <begin position="2"/>
        <end position="21"/>
    </location>
</feature>
<feature type="transmembrane region" description="Helical" evidence="1">
    <location>
        <begin position="31"/>
        <end position="48"/>
    </location>
</feature>
<feature type="transmembrane region" description="Helical" evidence="1">
    <location>
        <begin position="55"/>
        <end position="72"/>
    </location>
</feature>
<feature type="transmembrane region" description="Helical" evidence="1">
    <location>
        <begin position="112"/>
        <end position="134"/>
    </location>
</feature>
<feature type="transmembrane region" description="Helical" evidence="1">
    <location>
        <begin position="147"/>
        <end position="169"/>
    </location>
</feature>
<feature type="transmembrane region" description="Helical" evidence="1">
    <location>
        <begin position="179"/>
        <end position="196"/>
    </location>
</feature>
<feature type="transmembrane region" description="Helical" evidence="1">
    <location>
        <begin position="209"/>
        <end position="228"/>
    </location>
</feature>
<feature type="transmembrane region" description="Helical" evidence="1">
    <location>
        <begin position="233"/>
        <end position="255"/>
    </location>
</feature>
<feature type="transmembrane region" description="Helical" evidence="1">
    <location>
        <begin position="264"/>
        <end position="283"/>
    </location>
</feature>
<gene>
    <name type="ordered locus">lp_2503</name>
</gene>
<accession>Q88UI3</accession>
<accession>F9UR32</accession>
<sequence length="285" mass="30272">MGILIALIPAIAWGSIGLISGRMGGTARQQTLGMTMGALVFGLALWAVEQPTLTSKIWLIGIVSGLFWSIGQGQQFTSMKAVGISRTTPISTGMQLVANALAGVLLFNEWHGNMYWIGSASVIVLIAGAVLTSLTDKTDPNRSASENWGVGIRALILSTIGYAGYTIVVHYGNVNAQAVVMPQAVGMLLGALIWSFKDKPWVVKATYRNIVTGLVWGIGNLFMFMAMAQIGQAVAYSLSQMGIVISTFGSIYLLGEHKTKREMVYVVIGSILVIVGGVALSLMKA</sequence>
<organism>
    <name type="scientific">Lactiplantibacillus plantarum (strain ATCC BAA-793 / NCIMB 8826 / WCFS1)</name>
    <name type="common">Lactobacillus plantarum</name>
    <dbReference type="NCBI Taxonomy" id="220668"/>
    <lineage>
        <taxon>Bacteria</taxon>
        <taxon>Bacillati</taxon>
        <taxon>Bacillota</taxon>
        <taxon>Bacilli</taxon>
        <taxon>Lactobacillales</taxon>
        <taxon>Lactobacillaceae</taxon>
        <taxon>Lactiplantibacillus</taxon>
    </lineage>
</organism>
<reference key="1">
    <citation type="journal article" date="2003" name="Proc. Natl. Acad. Sci. U.S.A.">
        <title>Complete genome sequence of Lactobacillus plantarum WCFS1.</title>
        <authorList>
            <person name="Kleerebezem M."/>
            <person name="Boekhorst J."/>
            <person name="van Kranenburg R."/>
            <person name="Molenaar D."/>
            <person name="Kuipers O.P."/>
            <person name="Leer R."/>
            <person name="Tarchini R."/>
            <person name="Peters S.A."/>
            <person name="Sandbrink H.M."/>
            <person name="Fiers M.W.E.J."/>
            <person name="Stiekema W."/>
            <person name="Klein Lankhorst R.M."/>
            <person name="Bron P.A."/>
            <person name="Hoffer S.M."/>
            <person name="Nierop Groot M.N."/>
            <person name="Kerkhoven R."/>
            <person name="De Vries M."/>
            <person name="Ursing B."/>
            <person name="De Vos W.M."/>
            <person name="Siezen R.J."/>
        </authorList>
    </citation>
    <scope>NUCLEOTIDE SEQUENCE [LARGE SCALE GENOMIC DNA]</scope>
    <source>
        <strain>ATCC BAA-793 / NCIMB 8826 / WCFS1</strain>
    </source>
</reference>
<reference key="2">
    <citation type="journal article" date="2012" name="J. Bacteriol.">
        <title>Complete resequencing and reannotation of the Lactobacillus plantarum WCFS1 genome.</title>
        <authorList>
            <person name="Siezen R.J."/>
            <person name="Francke C."/>
            <person name="Renckens B."/>
            <person name="Boekhorst J."/>
            <person name="Wels M."/>
            <person name="Kleerebezem M."/>
            <person name="van Hijum S.A."/>
        </authorList>
    </citation>
    <scope>NUCLEOTIDE SEQUENCE [LARGE SCALE GENOMIC DNA]</scope>
    <scope>GENOME REANNOTATION</scope>
    <source>
        <strain>ATCC BAA-793 / NCIMB 8826 / WCFS1</strain>
    </source>
</reference>
<keyword id="KW-1003">Cell membrane</keyword>
<keyword id="KW-0472">Membrane</keyword>
<keyword id="KW-1185">Reference proteome</keyword>
<keyword id="KW-0762">Sugar transport</keyword>
<keyword id="KW-0812">Transmembrane</keyword>
<keyword id="KW-1133">Transmembrane helix</keyword>
<keyword id="KW-0813">Transport</keyword>
<protein>
    <recommendedName>
        <fullName>Putative sugar uptake protein lp_2503</fullName>
    </recommendedName>
</protein>
<evidence type="ECO:0000255" key="1"/>
<evidence type="ECO:0000305" key="2"/>
<name>Y2503_LACPL</name>